<protein>
    <recommendedName>
        <fullName evidence="1">Serine hydroxymethyltransferase</fullName>
        <shortName evidence="1">SHMT</shortName>
        <shortName evidence="1">Serine methylase</shortName>
        <ecNumber evidence="1">2.1.2.1</ecNumber>
    </recommendedName>
</protein>
<gene>
    <name evidence="1" type="primary">glyA</name>
    <name type="ordered locus">PG_0042</name>
</gene>
<evidence type="ECO:0000255" key="1">
    <source>
        <dbReference type="HAMAP-Rule" id="MF_00051"/>
    </source>
</evidence>
<accession>Q7MXW0</accession>
<comment type="function">
    <text evidence="1">Catalyzes the reversible interconversion of serine and glycine with tetrahydrofolate (THF) serving as the one-carbon carrier. This reaction serves as the major source of one-carbon groups required for the biosynthesis of purines, thymidylate, methionine, and other important biomolecules. Also exhibits THF-independent aldolase activity toward beta-hydroxyamino acids, producing glycine and aldehydes, via a retro-aldol mechanism.</text>
</comment>
<comment type="catalytic activity">
    <reaction evidence="1">
        <text>(6R)-5,10-methylene-5,6,7,8-tetrahydrofolate + glycine + H2O = (6S)-5,6,7,8-tetrahydrofolate + L-serine</text>
        <dbReference type="Rhea" id="RHEA:15481"/>
        <dbReference type="ChEBI" id="CHEBI:15377"/>
        <dbReference type="ChEBI" id="CHEBI:15636"/>
        <dbReference type="ChEBI" id="CHEBI:33384"/>
        <dbReference type="ChEBI" id="CHEBI:57305"/>
        <dbReference type="ChEBI" id="CHEBI:57453"/>
        <dbReference type="EC" id="2.1.2.1"/>
    </reaction>
</comment>
<comment type="cofactor">
    <cofactor evidence="1">
        <name>pyridoxal 5'-phosphate</name>
        <dbReference type="ChEBI" id="CHEBI:597326"/>
    </cofactor>
</comment>
<comment type="pathway">
    <text evidence="1">One-carbon metabolism; tetrahydrofolate interconversion.</text>
</comment>
<comment type="pathway">
    <text evidence="1">Amino-acid biosynthesis; glycine biosynthesis; glycine from L-serine: step 1/1.</text>
</comment>
<comment type="subunit">
    <text evidence="1">Homodimer.</text>
</comment>
<comment type="subcellular location">
    <subcellularLocation>
        <location evidence="1">Cytoplasm</location>
    </subcellularLocation>
</comment>
<comment type="similarity">
    <text evidence="1">Belongs to the SHMT family.</text>
</comment>
<sequence>MKKDSVIFDLIEKEHQRQLKGIELIASENFVSEQVMQAMGSCMTNKYAEGYPGKRYYGGCEVVDQSEQIAIDRIKQLYGAEWANVQPHSGAQANMAVLLACLEAGDTFMGLNLEHGGHLSHGSLVNSSGILYRPIGYNLSEETGMVDYDHMEKMAIEHKPKLIIGGGSAYSREWDYKRMREIADKVGALLMIDMAHPAGLIAAGLLENPVKYAHIVTSTTHKTLRGPRGGIILMGKDFDNPWGKKTPKGEIKKMSALLDSAVFPGVQGGPLEHVIAAKAVAFGEALDPSFKEYQTQVKKNAAVLAQAFMDKGYKVISGGTDNHSMLIDLRPKFPELTGKVAEKALVAADITVNKNMVPFDSRSAFQTSGFRVGTPAITTRGVKEDKMGYIVELIDRVLSAPEDEAVIASVRTEVNRMMADYPLFAW</sequence>
<proteinExistence type="inferred from homology"/>
<name>GLYA_PORGI</name>
<keyword id="KW-0028">Amino-acid biosynthesis</keyword>
<keyword id="KW-0963">Cytoplasm</keyword>
<keyword id="KW-0554">One-carbon metabolism</keyword>
<keyword id="KW-0663">Pyridoxal phosphate</keyword>
<keyword id="KW-1185">Reference proteome</keyword>
<keyword id="KW-0808">Transferase</keyword>
<dbReference type="EC" id="2.1.2.1" evidence="1"/>
<dbReference type="EMBL" id="AE015924">
    <property type="protein sequence ID" value="AAQ65294.1"/>
    <property type="molecule type" value="Genomic_DNA"/>
</dbReference>
<dbReference type="RefSeq" id="WP_004583439.1">
    <property type="nucleotide sequence ID" value="NC_002950.2"/>
</dbReference>
<dbReference type="SMR" id="Q7MXW0"/>
<dbReference type="STRING" id="242619.PG_0042"/>
<dbReference type="EnsemblBacteria" id="AAQ65294">
    <property type="protein sequence ID" value="AAQ65294"/>
    <property type="gene ID" value="PG_0042"/>
</dbReference>
<dbReference type="GeneID" id="29255296"/>
<dbReference type="KEGG" id="pgi:PG_0042"/>
<dbReference type="eggNOG" id="COG0112">
    <property type="taxonomic scope" value="Bacteria"/>
</dbReference>
<dbReference type="HOGENOM" id="CLU_022477_2_1_10"/>
<dbReference type="UniPathway" id="UPA00193"/>
<dbReference type="UniPathway" id="UPA00288">
    <property type="reaction ID" value="UER01023"/>
</dbReference>
<dbReference type="Proteomes" id="UP000000588">
    <property type="component" value="Chromosome"/>
</dbReference>
<dbReference type="GO" id="GO:0005829">
    <property type="term" value="C:cytosol"/>
    <property type="evidence" value="ECO:0007669"/>
    <property type="project" value="TreeGrafter"/>
</dbReference>
<dbReference type="GO" id="GO:0004372">
    <property type="term" value="F:glycine hydroxymethyltransferase activity"/>
    <property type="evidence" value="ECO:0007669"/>
    <property type="project" value="UniProtKB-UniRule"/>
</dbReference>
<dbReference type="GO" id="GO:0030170">
    <property type="term" value="F:pyridoxal phosphate binding"/>
    <property type="evidence" value="ECO:0007669"/>
    <property type="project" value="UniProtKB-UniRule"/>
</dbReference>
<dbReference type="GO" id="GO:0019264">
    <property type="term" value="P:glycine biosynthetic process from serine"/>
    <property type="evidence" value="ECO:0007669"/>
    <property type="project" value="UniProtKB-UniRule"/>
</dbReference>
<dbReference type="GO" id="GO:0035999">
    <property type="term" value="P:tetrahydrofolate interconversion"/>
    <property type="evidence" value="ECO:0007669"/>
    <property type="project" value="UniProtKB-UniRule"/>
</dbReference>
<dbReference type="CDD" id="cd00378">
    <property type="entry name" value="SHMT"/>
    <property type="match status" value="1"/>
</dbReference>
<dbReference type="FunFam" id="3.40.640.10:FF:000001">
    <property type="entry name" value="Serine hydroxymethyltransferase"/>
    <property type="match status" value="1"/>
</dbReference>
<dbReference type="Gene3D" id="3.90.1150.10">
    <property type="entry name" value="Aspartate Aminotransferase, domain 1"/>
    <property type="match status" value="1"/>
</dbReference>
<dbReference type="Gene3D" id="3.40.640.10">
    <property type="entry name" value="Type I PLP-dependent aspartate aminotransferase-like (Major domain)"/>
    <property type="match status" value="1"/>
</dbReference>
<dbReference type="HAMAP" id="MF_00051">
    <property type="entry name" value="SHMT"/>
    <property type="match status" value="1"/>
</dbReference>
<dbReference type="InterPro" id="IPR015424">
    <property type="entry name" value="PyrdxlP-dep_Trfase"/>
</dbReference>
<dbReference type="InterPro" id="IPR015421">
    <property type="entry name" value="PyrdxlP-dep_Trfase_major"/>
</dbReference>
<dbReference type="InterPro" id="IPR015422">
    <property type="entry name" value="PyrdxlP-dep_Trfase_small"/>
</dbReference>
<dbReference type="InterPro" id="IPR001085">
    <property type="entry name" value="Ser_HO-MeTrfase"/>
</dbReference>
<dbReference type="InterPro" id="IPR049943">
    <property type="entry name" value="Ser_HO-MeTrfase-like"/>
</dbReference>
<dbReference type="InterPro" id="IPR019798">
    <property type="entry name" value="Ser_HO-MeTrfase_PLP_BS"/>
</dbReference>
<dbReference type="InterPro" id="IPR039429">
    <property type="entry name" value="SHMT-like_dom"/>
</dbReference>
<dbReference type="NCBIfam" id="NF000586">
    <property type="entry name" value="PRK00011.1"/>
    <property type="match status" value="1"/>
</dbReference>
<dbReference type="PANTHER" id="PTHR11680">
    <property type="entry name" value="SERINE HYDROXYMETHYLTRANSFERASE"/>
    <property type="match status" value="1"/>
</dbReference>
<dbReference type="PANTHER" id="PTHR11680:SF35">
    <property type="entry name" value="SERINE HYDROXYMETHYLTRANSFERASE 1"/>
    <property type="match status" value="1"/>
</dbReference>
<dbReference type="Pfam" id="PF00464">
    <property type="entry name" value="SHMT"/>
    <property type="match status" value="1"/>
</dbReference>
<dbReference type="PIRSF" id="PIRSF000412">
    <property type="entry name" value="SHMT"/>
    <property type="match status" value="1"/>
</dbReference>
<dbReference type="SUPFAM" id="SSF53383">
    <property type="entry name" value="PLP-dependent transferases"/>
    <property type="match status" value="1"/>
</dbReference>
<dbReference type="PROSITE" id="PS00096">
    <property type="entry name" value="SHMT"/>
    <property type="match status" value="1"/>
</dbReference>
<reference key="1">
    <citation type="journal article" date="2003" name="J. Bacteriol.">
        <title>Complete genome sequence of the oral pathogenic bacterium Porphyromonas gingivalis strain W83.</title>
        <authorList>
            <person name="Nelson K.E."/>
            <person name="Fleischmann R.D."/>
            <person name="DeBoy R.T."/>
            <person name="Paulsen I.T."/>
            <person name="Fouts D.E."/>
            <person name="Eisen J.A."/>
            <person name="Daugherty S.C."/>
            <person name="Dodson R.J."/>
            <person name="Durkin A.S."/>
            <person name="Gwinn M.L."/>
            <person name="Haft D.H."/>
            <person name="Kolonay J.F."/>
            <person name="Nelson W.C."/>
            <person name="Mason T.M."/>
            <person name="Tallon L."/>
            <person name="Gray J."/>
            <person name="Granger D."/>
            <person name="Tettelin H."/>
            <person name="Dong H."/>
            <person name="Galvin J.L."/>
            <person name="Duncan M.J."/>
            <person name="Dewhirst F.E."/>
            <person name="Fraser C.M."/>
        </authorList>
    </citation>
    <scope>NUCLEOTIDE SEQUENCE [LARGE SCALE GENOMIC DNA]</scope>
    <source>
        <strain>ATCC BAA-308 / W83</strain>
    </source>
</reference>
<organism>
    <name type="scientific">Porphyromonas gingivalis (strain ATCC BAA-308 / W83)</name>
    <dbReference type="NCBI Taxonomy" id="242619"/>
    <lineage>
        <taxon>Bacteria</taxon>
        <taxon>Pseudomonadati</taxon>
        <taxon>Bacteroidota</taxon>
        <taxon>Bacteroidia</taxon>
        <taxon>Bacteroidales</taxon>
        <taxon>Porphyromonadaceae</taxon>
        <taxon>Porphyromonas</taxon>
    </lineage>
</organism>
<feature type="chain" id="PRO_0000113633" description="Serine hydroxymethyltransferase">
    <location>
        <begin position="1"/>
        <end position="426"/>
    </location>
</feature>
<feature type="binding site" evidence="1">
    <location>
        <position position="113"/>
    </location>
    <ligand>
        <name>(6S)-5,6,7,8-tetrahydrofolate</name>
        <dbReference type="ChEBI" id="CHEBI:57453"/>
    </ligand>
</feature>
<feature type="binding site" evidence="1">
    <location>
        <begin position="117"/>
        <end position="119"/>
    </location>
    <ligand>
        <name>(6S)-5,6,7,8-tetrahydrofolate</name>
        <dbReference type="ChEBI" id="CHEBI:57453"/>
    </ligand>
</feature>
<feature type="binding site" evidence="1">
    <location>
        <begin position="363"/>
        <end position="365"/>
    </location>
    <ligand>
        <name>(6S)-5,6,7,8-tetrahydrofolate</name>
        <dbReference type="ChEBI" id="CHEBI:57453"/>
    </ligand>
</feature>
<feature type="site" description="Plays an important role in substrate specificity" evidence="1">
    <location>
        <position position="221"/>
    </location>
</feature>
<feature type="modified residue" description="N6-(pyridoxal phosphate)lysine" evidence="1">
    <location>
        <position position="222"/>
    </location>
</feature>